<accession>P09920</accession>
<gene>
    <name type="primary">Csf3</name>
    <name type="synonym">Csfg</name>
</gene>
<reference key="1">
    <citation type="journal article" date="1986" name="Proc. Natl. Acad. Sci. U.S.A.">
        <title>Isolation and characterization of the cDNA for murine granulocyte colony-stimulating factor.</title>
        <authorList>
            <person name="Tsuchiya M."/>
            <person name="Asano S."/>
            <person name="Kaziro Y."/>
            <person name="Nagata S."/>
        </authorList>
    </citation>
    <scope>NUCLEOTIDE SEQUENCE [MRNA]</scope>
</reference>
<reference key="2">
    <citation type="journal article" date="1987" name="Eur. J. Biochem.">
        <title>The chromosomal gene structure for murine granulocyte colony-stimulating factor.</title>
        <authorList>
            <person name="Tsuchiya M."/>
            <person name="Kaziro Y."/>
            <person name="Nagata S."/>
        </authorList>
    </citation>
    <scope>NUCLEOTIDE SEQUENCE [GENOMIC DNA]</scope>
</reference>
<reference key="3">
    <citation type="journal article" date="1987" name="Biol. Chem. Hoppe-Seyler">
        <title>Structural studies on the murine granulocyte colony-stimulating factor.</title>
        <authorList>
            <person name="Simpson R.J."/>
            <person name="Nice E.C."/>
            <person name="Nicola N.A."/>
        </authorList>
    </citation>
    <scope>PARTIAL PROTEIN SEQUENCE</scope>
</reference>
<name>CSF3_MOUSE</name>
<keyword id="KW-0202">Cytokine</keyword>
<keyword id="KW-0903">Direct protein sequencing</keyword>
<keyword id="KW-1015">Disulfide bond</keyword>
<keyword id="KW-0325">Glycoprotein</keyword>
<keyword id="KW-0339">Growth factor</keyword>
<keyword id="KW-1185">Reference proteome</keyword>
<keyword id="KW-0964">Secreted</keyword>
<keyword id="KW-0732">Signal</keyword>
<comment type="function">
    <text>Granulocyte/macrophage colony-stimulating factors are cytokines that act in hematopoiesis by controlling the production, differentiation, and function of 2 related white cell populations of the blood, the granulocytes and the monocytes-macrophages. This CSF induces granulocytes.</text>
</comment>
<comment type="subunit">
    <text>Monomer.</text>
</comment>
<comment type="subcellular location">
    <subcellularLocation>
        <location>Secreted</location>
    </subcellularLocation>
</comment>
<comment type="PTM">
    <text evidence="1">O-glycosylated.</text>
</comment>
<comment type="similarity">
    <text evidence="2">Belongs to the IL-6 superfamily.</text>
</comment>
<sequence>MAQLSAQRRMKLMALQLLLWQSALWSGREAVPLVTVSALPPSLPLPRSFLLKSLEQVRKIQASGSVLLEQLCATYKLCHPEELVLLGHSLGIPKASLSGCSSQALQQTQCLSQLHSGLCLYQGLLQALSGISPALAPTLDLLQLDVANFATTIWQQMENLGVAPTVQPTQSAMPAFTSAFQRRAGGVLAISYLQGFLETARLALHHLA</sequence>
<proteinExistence type="evidence at protein level"/>
<feature type="signal peptide">
    <location>
        <begin position="1"/>
        <end position="30"/>
    </location>
</feature>
<feature type="chain" id="PRO_0000015571" description="Granulocyte colony-stimulating factor">
    <location>
        <begin position="31"/>
        <end position="208"/>
    </location>
</feature>
<feature type="glycosylation site" description="O-linked (GalNAc...) threonine" evidence="1">
    <location>
        <position position="169"/>
    </location>
</feature>
<feature type="disulfide bond" evidence="1">
    <location>
        <begin position="72"/>
        <end position="78"/>
    </location>
</feature>
<feature type="disulfide bond" evidence="1">
    <location>
        <begin position="100"/>
        <end position="110"/>
    </location>
</feature>
<evidence type="ECO:0000250" key="1"/>
<evidence type="ECO:0000305" key="2"/>
<protein>
    <recommendedName>
        <fullName>Granulocyte colony-stimulating factor</fullName>
        <shortName>G-CSF</shortName>
    </recommendedName>
</protein>
<dbReference type="EMBL" id="M13926">
    <property type="protein sequence ID" value="AAA37672.1"/>
    <property type="molecule type" value="mRNA"/>
</dbReference>
<dbReference type="EMBL" id="X05402">
    <property type="protein sequence ID" value="CAA28986.1"/>
    <property type="molecule type" value="Genomic_DNA"/>
</dbReference>
<dbReference type="CCDS" id="CCDS25360.1"/>
<dbReference type="PIR" id="A29536">
    <property type="entry name" value="A26496"/>
</dbReference>
<dbReference type="RefSeq" id="NP_034101.1">
    <property type="nucleotide sequence ID" value="NM_009971.1"/>
</dbReference>
<dbReference type="SMR" id="P09920"/>
<dbReference type="BioGRID" id="198934">
    <property type="interactions" value="1"/>
</dbReference>
<dbReference type="DIP" id="DIP-6118N"/>
<dbReference type="FunCoup" id="P09920">
    <property type="interactions" value="673"/>
</dbReference>
<dbReference type="STRING" id="10090.ENSMUSP00000037762"/>
<dbReference type="GlyCosmos" id="P09920">
    <property type="glycosylation" value="1 site, No reported glycans"/>
</dbReference>
<dbReference type="GlyGen" id="P09920">
    <property type="glycosylation" value="2 sites"/>
</dbReference>
<dbReference type="PhosphoSitePlus" id="P09920"/>
<dbReference type="PaxDb" id="10090-ENSMUSP00000037762"/>
<dbReference type="Antibodypedia" id="799">
    <property type="antibodies" value="1369 antibodies from 40 providers"/>
</dbReference>
<dbReference type="DNASU" id="12985"/>
<dbReference type="Ensembl" id="ENSMUST00000038886.3">
    <property type="protein sequence ID" value="ENSMUSP00000037762.3"/>
    <property type="gene ID" value="ENSMUSG00000038067.3"/>
</dbReference>
<dbReference type="GeneID" id="12985"/>
<dbReference type="KEGG" id="mmu:12985"/>
<dbReference type="UCSC" id="uc007lgy.1">
    <property type="organism name" value="mouse"/>
</dbReference>
<dbReference type="AGR" id="MGI:1339751"/>
<dbReference type="CTD" id="1440"/>
<dbReference type="MGI" id="MGI:1339751">
    <property type="gene designation" value="Csf3"/>
</dbReference>
<dbReference type="VEuPathDB" id="HostDB:ENSMUSG00000038067"/>
<dbReference type="eggNOG" id="ENOG502SCNA">
    <property type="taxonomic scope" value="Eukaryota"/>
</dbReference>
<dbReference type="GeneTree" id="ENSGT00390000017328"/>
<dbReference type="HOGENOM" id="CLU_118367_0_0_1"/>
<dbReference type="InParanoid" id="P09920"/>
<dbReference type="OMA" id="APLEQCH"/>
<dbReference type="OrthoDB" id="9896489at2759"/>
<dbReference type="PhylomeDB" id="P09920"/>
<dbReference type="TreeFam" id="TF337698"/>
<dbReference type="Reactome" id="R-MMU-9674555">
    <property type="pathway name" value="Signaling by CSF3 (G-CSF)"/>
</dbReference>
<dbReference type="Reactome" id="R-MMU-9705462">
    <property type="pathway name" value="Inactivation of CSF3 (G-CSF) signaling"/>
</dbReference>
<dbReference type="BioGRID-ORCS" id="12985">
    <property type="hits" value="4 hits in 80 CRISPR screens"/>
</dbReference>
<dbReference type="PRO" id="PR:P09920"/>
<dbReference type="Proteomes" id="UP000000589">
    <property type="component" value="Chromosome 11"/>
</dbReference>
<dbReference type="RNAct" id="P09920">
    <property type="molecule type" value="protein"/>
</dbReference>
<dbReference type="Bgee" id="ENSMUSG00000038067">
    <property type="expression patterns" value="Expressed in entorhinal cortex and 13 other cell types or tissues"/>
</dbReference>
<dbReference type="ExpressionAtlas" id="P09920">
    <property type="expression patterns" value="baseline and differential"/>
</dbReference>
<dbReference type="GO" id="GO:0071682">
    <property type="term" value="C:endocytic vesicle lumen"/>
    <property type="evidence" value="ECO:0000304"/>
    <property type="project" value="Reactome"/>
</dbReference>
<dbReference type="GO" id="GO:0005576">
    <property type="term" value="C:extracellular region"/>
    <property type="evidence" value="ECO:0000304"/>
    <property type="project" value="Reactome"/>
</dbReference>
<dbReference type="GO" id="GO:0005615">
    <property type="term" value="C:extracellular space"/>
    <property type="evidence" value="ECO:0007669"/>
    <property type="project" value="UniProtKB-KW"/>
</dbReference>
<dbReference type="GO" id="GO:0005125">
    <property type="term" value="F:cytokine activity"/>
    <property type="evidence" value="ECO:0000303"/>
    <property type="project" value="UniProtKB"/>
</dbReference>
<dbReference type="GO" id="GO:0019899">
    <property type="term" value="F:enzyme binding"/>
    <property type="evidence" value="ECO:0007669"/>
    <property type="project" value="Ensembl"/>
</dbReference>
<dbReference type="GO" id="GO:0005130">
    <property type="term" value="F:granulocyte colony-stimulating factor receptor binding"/>
    <property type="evidence" value="ECO:0000353"/>
    <property type="project" value="MGI"/>
</dbReference>
<dbReference type="GO" id="GO:0008083">
    <property type="term" value="F:growth factor activity"/>
    <property type="evidence" value="ECO:0007669"/>
    <property type="project" value="UniProtKB-KW"/>
</dbReference>
<dbReference type="GO" id="GO:0038158">
    <property type="term" value="P:granulocyte colony-stimulating factor signaling pathway"/>
    <property type="evidence" value="ECO:0007669"/>
    <property type="project" value="Ensembl"/>
</dbReference>
<dbReference type="GO" id="GO:0030851">
    <property type="term" value="P:granulocyte differentiation"/>
    <property type="evidence" value="ECO:0000303"/>
    <property type="project" value="UniProtKB"/>
</dbReference>
<dbReference type="GO" id="GO:0006955">
    <property type="term" value="P:immune response"/>
    <property type="evidence" value="ECO:0007669"/>
    <property type="project" value="InterPro"/>
</dbReference>
<dbReference type="GO" id="GO:0030838">
    <property type="term" value="P:positive regulation of actin filament polymerization"/>
    <property type="evidence" value="ECO:0007669"/>
    <property type="project" value="Ensembl"/>
</dbReference>
<dbReference type="GO" id="GO:0045639">
    <property type="term" value="P:positive regulation of myeloid cell differentiation"/>
    <property type="evidence" value="ECO:0000316"/>
    <property type="project" value="MGI"/>
</dbReference>
<dbReference type="GO" id="GO:0051897">
    <property type="term" value="P:positive regulation of phosphatidylinositol 3-kinase/protein kinase B signal transduction"/>
    <property type="evidence" value="ECO:0007669"/>
    <property type="project" value="Ensembl"/>
</dbReference>
<dbReference type="GO" id="GO:0045944">
    <property type="term" value="P:positive regulation of transcription by RNA polymerase II"/>
    <property type="evidence" value="ECO:0007669"/>
    <property type="project" value="Ensembl"/>
</dbReference>
<dbReference type="FunFam" id="1.20.1250.10:FF:000021">
    <property type="entry name" value="Granulocyte colony-stimulating factor"/>
    <property type="match status" value="1"/>
</dbReference>
<dbReference type="Gene3D" id="1.20.1250.10">
    <property type="match status" value="1"/>
</dbReference>
<dbReference type="InterPro" id="IPR009079">
    <property type="entry name" value="4_helix_cytokine-like_core"/>
</dbReference>
<dbReference type="InterPro" id="IPR040117">
    <property type="entry name" value="GCSF/MGF"/>
</dbReference>
<dbReference type="InterPro" id="IPR030474">
    <property type="entry name" value="IL-6/GCSF/MGF"/>
</dbReference>
<dbReference type="InterPro" id="IPR030473">
    <property type="entry name" value="IL6/GCSF/MGF_CS"/>
</dbReference>
<dbReference type="PANTHER" id="PTHR10511">
    <property type="entry name" value="GRANULOCYTE COLONY-STIMULATING FACTOR"/>
    <property type="match status" value="1"/>
</dbReference>
<dbReference type="PANTHER" id="PTHR10511:SF2">
    <property type="entry name" value="GRANULOCYTE COLONY-STIMULATING FACTOR"/>
    <property type="match status" value="1"/>
</dbReference>
<dbReference type="Pfam" id="PF16647">
    <property type="entry name" value="GCSF"/>
    <property type="match status" value="1"/>
</dbReference>
<dbReference type="PIRSF" id="PIRSF001935">
    <property type="entry name" value="IL6_MGF_GCSF"/>
    <property type="match status" value="1"/>
</dbReference>
<dbReference type="PRINTS" id="PR00433">
    <property type="entry name" value="IL6GCSFMGF"/>
</dbReference>
<dbReference type="SMART" id="SM00126">
    <property type="entry name" value="IL6"/>
    <property type="match status" value="1"/>
</dbReference>
<dbReference type="SUPFAM" id="SSF47266">
    <property type="entry name" value="4-helical cytokines"/>
    <property type="match status" value="1"/>
</dbReference>
<dbReference type="PROSITE" id="PS00254">
    <property type="entry name" value="INTERLEUKIN_6"/>
    <property type="match status" value="1"/>
</dbReference>
<organism>
    <name type="scientific">Mus musculus</name>
    <name type="common">Mouse</name>
    <dbReference type="NCBI Taxonomy" id="10090"/>
    <lineage>
        <taxon>Eukaryota</taxon>
        <taxon>Metazoa</taxon>
        <taxon>Chordata</taxon>
        <taxon>Craniata</taxon>
        <taxon>Vertebrata</taxon>
        <taxon>Euteleostomi</taxon>
        <taxon>Mammalia</taxon>
        <taxon>Eutheria</taxon>
        <taxon>Euarchontoglires</taxon>
        <taxon>Glires</taxon>
        <taxon>Rodentia</taxon>
        <taxon>Myomorpha</taxon>
        <taxon>Muroidea</taxon>
        <taxon>Muridae</taxon>
        <taxon>Murinae</taxon>
        <taxon>Mus</taxon>
        <taxon>Mus</taxon>
    </lineage>
</organism>